<sequence>MRDPVTGFVYPAAWVEKVSDPAGLEKVRGGSAVLTSSGTVLLRGYTTGTTAAAACKAAILSLAGDISRVTIQLPCGLSADLPVKARAGHASCRKYAGDYPSDVTAGIEFIADAAVAQKGILLVPGPGIGHFVRDTPRYKKREPAISTAPLACILSSMEEALGATGLSGATVTLSIPEGRTIADQTLNPRIGIEGGISVLGSTGLVEPWDDHLEDSVIARVAGATDPVITTGRVGLRYARLLFPDREVVLAGGKIKGALAAAKGEVTLCGLPALILKYIEPHILDKTGYATVEELAASPSFPSVALPILVAYKKKHPRVRVVLVNREGTVIAESP</sequence>
<gene>
    <name evidence="1" type="primary">cbiD</name>
    <name type="ordered locus">Mboo_1224</name>
</gene>
<name>CBID_METB6</name>
<accession>A7I7N1</accession>
<protein>
    <recommendedName>
        <fullName evidence="1">Cobalt-precorrin-5B C(1)-methyltransferase</fullName>
        <ecNumber evidence="1">2.1.1.195</ecNumber>
    </recommendedName>
    <alternativeName>
        <fullName evidence="1">Cobalt-precorrin-6A synthase</fullName>
    </alternativeName>
</protein>
<keyword id="KW-0169">Cobalamin biosynthesis</keyword>
<keyword id="KW-0489">Methyltransferase</keyword>
<keyword id="KW-1185">Reference proteome</keyword>
<keyword id="KW-0949">S-adenosyl-L-methionine</keyword>
<keyword id="KW-0808">Transferase</keyword>
<reference key="1">
    <citation type="journal article" date="2015" name="Microbiology">
        <title>Genome of Methanoregula boonei 6A8 reveals adaptations to oligotrophic peatland environments.</title>
        <authorList>
            <person name="Braeuer S."/>
            <person name="Cadillo-Quiroz H."/>
            <person name="Kyrpides N."/>
            <person name="Woyke T."/>
            <person name="Goodwin L."/>
            <person name="Detter C."/>
            <person name="Podell S."/>
            <person name="Yavitt J.B."/>
            <person name="Zinder S.H."/>
        </authorList>
    </citation>
    <scope>NUCLEOTIDE SEQUENCE [LARGE SCALE GENOMIC DNA]</scope>
    <source>
        <strain>DSM 21154 / JCM 14090 / 6A8</strain>
    </source>
</reference>
<comment type="function">
    <text evidence="1">Catalyzes the methylation of C-1 in cobalt-precorrin-5B to form cobalt-precorrin-6A.</text>
</comment>
<comment type="catalytic activity">
    <reaction evidence="1">
        <text>Co-precorrin-5B + S-adenosyl-L-methionine = Co-precorrin-6A + S-adenosyl-L-homocysteine</text>
        <dbReference type="Rhea" id="RHEA:26285"/>
        <dbReference type="ChEBI" id="CHEBI:57856"/>
        <dbReference type="ChEBI" id="CHEBI:59789"/>
        <dbReference type="ChEBI" id="CHEBI:60063"/>
        <dbReference type="ChEBI" id="CHEBI:60064"/>
        <dbReference type="EC" id="2.1.1.195"/>
    </reaction>
</comment>
<comment type="pathway">
    <text evidence="1">Cofactor biosynthesis; adenosylcobalamin biosynthesis; cob(II)yrinate a,c-diamide from sirohydrochlorin (anaerobic route): step 6/10.</text>
</comment>
<comment type="similarity">
    <text evidence="1">Belongs to the CbiD family.</text>
</comment>
<evidence type="ECO:0000255" key="1">
    <source>
        <dbReference type="HAMAP-Rule" id="MF_00787"/>
    </source>
</evidence>
<proteinExistence type="inferred from homology"/>
<organism>
    <name type="scientific">Methanoregula boonei (strain DSM 21154 / JCM 14090 / 6A8)</name>
    <dbReference type="NCBI Taxonomy" id="456442"/>
    <lineage>
        <taxon>Archaea</taxon>
        <taxon>Methanobacteriati</taxon>
        <taxon>Methanobacteriota</taxon>
        <taxon>Stenosarchaea group</taxon>
        <taxon>Methanomicrobia</taxon>
        <taxon>Methanomicrobiales</taxon>
        <taxon>Methanoregulaceae</taxon>
        <taxon>Methanoregula</taxon>
    </lineage>
</organism>
<feature type="chain" id="PRO_1000046863" description="Cobalt-precorrin-5B C(1)-methyltransferase">
    <location>
        <begin position="1"/>
        <end position="334"/>
    </location>
</feature>
<dbReference type="EC" id="2.1.1.195" evidence="1"/>
<dbReference type="EMBL" id="CP000780">
    <property type="protein sequence ID" value="ABS55742.1"/>
    <property type="molecule type" value="Genomic_DNA"/>
</dbReference>
<dbReference type="RefSeq" id="WP_012106773.1">
    <property type="nucleotide sequence ID" value="NC_009712.1"/>
</dbReference>
<dbReference type="SMR" id="A7I7N1"/>
<dbReference type="STRING" id="456442.Mboo_1224"/>
<dbReference type="GeneID" id="5411903"/>
<dbReference type="KEGG" id="mbn:Mboo_1224"/>
<dbReference type="eggNOG" id="arCOG04383">
    <property type="taxonomic scope" value="Archaea"/>
</dbReference>
<dbReference type="HOGENOM" id="CLU_820433_0_0_2"/>
<dbReference type="OrthoDB" id="10423at2157"/>
<dbReference type="UniPathway" id="UPA00148">
    <property type="reaction ID" value="UER00227"/>
</dbReference>
<dbReference type="Proteomes" id="UP000002408">
    <property type="component" value="Chromosome"/>
</dbReference>
<dbReference type="GO" id="GO:0043780">
    <property type="term" value="F:cobalt-precorrin-5B C1-methyltransferase activity"/>
    <property type="evidence" value="ECO:0007669"/>
    <property type="project" value="RHEA"/>
</dbReference>
<dbReference type="GO" id="GO:0019251">
    <property type="term" value="P:anaerobic cobalamin biosynthetic process"/>
    <property type="evidence" value="ECO:0007669"/>
    <property type="project" value="UniProtKB-UniRule"/>
</dbReference>
<dbReference type="GO" id="GO:0032259">
    <property type="term" value="P:methylation"/>
    <property type="evidence" value="ECO:0007669"/>
    <property type="project" value="UniProtKB-KW"/>
</dbReference>
<dbReference type="Gene3D" id="3.30.2110.10">
    <property type="entry name" value="CbiD-like"/>
    <property type="match status" value="1"/>
</dbReference>
<dbReference type="Gene3D" id="3.40.50.10720">
    <property type="entry name" value="CbiD-like domains"/>
    <property type="match status" value="1"/>
</dbReference>
<dbReference type="HAMAP" id="MF_00787">
    <property type="entry name" value="CbiD"/>
    <property type="match status" value="1"/>
</dbReference>
<dbReference type="InterPro" id="IPR002748">
    <property type="entry name" value="CbiD"/>
</dbReference>
<dbReference type="InterPro" id="IPR036074">
    <property type="entry name" value="CbiD_sf"/>
</dbReference>
<dbReference type="NCBIfam" id="NF000856">
    <property type="entry name" value="PRK00075.2-5"/>
    <property type="match status" value="1"/>
</dbReference>
<dbReference type="PANTHER" id="PTHR35863">
    <property type="entry name" value="COBALT-PRECORRIN-5B C(1)-METHYLTRANSFERASE"/>
    <property type="match status" value="1"/>
</dbReference>
<dbReference type="PANTHER" id="PTHR35863:SF1">
    <property type="entry name" value="COBALT-PRECORRIN-5B C(1)-METHYLTRANSFERASE"/>
    <property type="match status" value="1"/>
</dbReference>
<dbReference type="Pfam" id="PF01888">
    <property type="entry name" value="CbiD"/>
    <property type="match status" value="1"/>
</dbReference>
<dbReference type="SUPFAM" id="SSF111342">
    <property type="entry name" value="CbiD-like"/>
    <property type="match status" value="1"/>
</dbReference>